<proteinExistence type="evidence at protein level"/>
<name>G6PC2_HUMAN</name>
<organism>
    <name type="scientific">Homo sapiens</name>
    <name type="common">Human</name>
    <dbReference type="NCBI Taxonomy" id="9606"/>
    <lineage>
        <taxon>Eukaryota</taxon>
        <taxon>Metazoa</taxon>
        <taxon>Chordata</taxon>
        <taxon>Craniata</taxon>
        <taxon>Vertebrata</taxon>
        <taxon>Euteleostomi</taxon>
        <taxon>Mammalia</taxon>
        <taxon>Eutheria</taxon>
        <taxon>Euarchontoglires</taxon>
        <taxon>Primates</taxon>
        <taxon>Haplorrhini</taxon>
        <taxon>Catarrhini</taxon>
        <taxon>Hominidae</taxon>
        <taxon>Homo</taxon>
    </lineage>
</organism>
<comment type="function">
    <text evidence="1">May hydrolyze glucose-6-phosphate to glucose in the endoplasmic reticulum. May be responsible for glucose production through glycogenolysis and gluconeogenesis (By similarity).</text>
</comment>
<comment type="catalytic activity">
    <reaction evidence="4">
        <text>D-glucose 6-phosphate + H2O = D-glucose + phosphate</text>
        <dbReference type="Rhea" id="RHEA:16689"/>
        <dbReference type="ChEBI" id="CHEBI:4167"/>
        <dbReference type="ChEBI" id="CHEBI:15377"/>
        <dbReference type="ChEBI" id="CHEBI:43474"/>
        <dbReference type="ChEBI" id="CHEBI:61548"/>
        <dbReference type="EC" id="3.1.3.9"/>
    </reaction>
</comment>
<comment type="biophysicochemical properties">
    <kinetics>
        <KM>0.45 mM for glucose-6-phosphate (at pH 6.5)</KM>
    </kinetics>
</comment>
<comment type="pathway">
    <text>Carbohydrate biosynthesis; gluconeogenesis.</text>
</comment>
<comment type="subcellular location">
    <subcellularLocation>
        <location evidence="5">Endoplasmic reticulum membrane</location>
        <topology evidence="5">Multi-pass membrane protein</topology>
    </subcellularLocation>
</comment>
<comment type="alternative products">
    <event type="alternative splicing"/>
    <isoform>
        <id>Q9NQR9-1</id>
        <name>1</name>
        <sequence type="displayed"/>
    </isoform>
    <isoform>
        <id>Q9NQR9-2</id>
        <name>2</name>
        <sequence type="described" ref="VSP_033648 VSP_033649"/>
    </isoform>
    <isoform>
        <id>Q9NQR9-3</id>
        <name>3</name>
        <sequence type="described" ref="VSP_046180 VSP_046181"/>
    </isoform>
</comment>
<comment type="tissue specificity">
    <text evidence="3">Specifically expressed in pancreas and also detected to a lower extent in testis. Expressed by most islet cells in the pancreas (at protein level).</text>
</comment>
<comment type="PTM">
    <text evidence="5">N-glycosylated; the non-glycosylated form is more unstable and is degraded through the proteasome.</text>
</comment>
<comment type="polymorphism">
    <text>Genetic variations in G6PC2 define the fasting plasma glucose levels quantitative trait locus 1 (FGQTL1) [MIM:612108]. The normal fasting plasma glucose level in the plasma is defined as less than 100 mg per deciliter (5.55 mmol per liter). Higher fasting plasma glucose levels predict type 2 diabetes in young adults and increases the risk of mortality.</text>
</comment>
<comment type="similarity">
    <text evidence="8">Belongs to the glucose-6-phosphatase family.</text>
</comment>
<gene>
    <name type="primary">G6PC2</name>
    <name type="synonym">IGRP</name>
</gene>
<protein>
    <recommendedName>
        <fullName>Glucose-6-phosphatase 2</fullName>
        <shortName>G-6-Pase 2</shortName>
        <shortName>G6Pase 2</shortName>
        <ecNumber>3.1.3.9</ecNumber>
    </recommendedName>
    <alternativeName>
        <fullName>Islet-specific glucose-6-phosphatase catalytic subunit-related protein</fullName>
    </alternativeName>
</protein>
<sequence>MDFLHRNGVLIIQHLQKDYRAYYTFLNFMSNVGDPRNIFFIYFPLCFQFNQTVGTKMIWVAVIGDWLNLIFKWILFGHRPYWWVQETQIYPNHSSPCLEQFPTTCETGPGSPSGHAMGASCVWYVMVTAALSHTVCGMDKFSITLHRLTWSFLWSVFWLIQISVCISRVFIATHFPHQVILGVIGGMLVAEAFEHTPGIQTASLGTYLKTNLFLFLFAVGFYLLLRVLNIDLLWSVPIAKKWCANPDWIHIDTTPFAGLVRNLGVLFGLGFAINSEMFLLSCRGGNNYTLSFRLLCALTSLTILQLYHFLQIPTHEEHLFYVLSFCKSASIPLTVVAFIPYSVHMLMKQSGKKSQ</sequence>
<dbReference type="EC" id="3.1.3.9"/>
<dbReference type="EMBL" id="AF283835">
    <property type="protein sequence ID" value="AAF82810.1"/>
    <property type="molecule type" value="Genomic_DNA"/>
</dbReference>
<dbReference type="EMBL" id="BQ777188">
    <property type="status" value="NOT_ANNOTATED_CDS"/>
    <property type="molecule type" value="mRNA"/>
</dbReference>
<dbReference type="EMBL" id="CR627438">
    <property type="protein sequence ID" value="CAH10524.1"/>
    <property type="molecule type" value="mRNA"/>
</dbReference>
<dbReference type="EMBL" id="AC069137">
    <property type="status" value="NOT_ANNOTATED_CDS"/>
    <property type="molecule type" value="Genomic_DNA"/>
</dbReference>
<dbReference type="EMBL" id="CH471058">
    <property type="protein sequence ID" value="EAX11291.1"/>
    <property type="molecule type" value="Genomic_DNA"/>
</dbReference>
<dbReference type="EMBL" id="BC104778">
    <property type="protein sequence ID" value="AAI04779.1"/>
    <property type="molecule type" value="mRNA"/>
</dbReference>
<dbReference type="EMBL" id="BC113376">
    <property type="protein sequence ID" value="AAI13377.1"/>
    <property type="molecule type" value="mRNA"/>
</dbReference>
<dbReference type="CCDS" id="CCDS2230.1">
    <molecule id="Q9NQR9-1"/>
</dbReference>
<dbReference type="CCDS" id="CCDS46443.1">
    <molecule id="Q9NQR9-3"/>
</dbReference>
<dbReference type="RefSeq" id="NP_001075155.1">
    <molecule id="Q9NQR9-3"/>
    <property type="nucleotide sequence ID" value="NM_001081686.2"/>
</dbReference>
<dbReference type="RefSeq" id="NP_066999.1">
    <molecule id="Q9NQR9-1"/>
    <property type="nucleotide sequence ID" value="NM_021176.3"/>
</dbReference>
<dbReference type="SMR" id="Q9NQR9"/>
<dbReference type="BioGRID" id="121777">
    <property type="interactions" value="4"/>
</dbReference>
<dbReference type="FunCoup" id="Q9NQR9">
    <property type="interactions" value="695"/>
</dbReference>
<dbReference type="STRING" id="9606.ENSP00000364512"/>
<dbReference type="DEPOD" id="G6PC2"/>
<dbReference type="GlyCosmos" id="Q9NQR9">
    <property type="glycosylation" value="1 site, No reported glycans"/>
</dbReference>
<dbReference type="GlyGen" id="Q9NQR9">
    <property type="glycosylation" value="1 site"/>
</dbReference>
<dbReference type="iPTMnet" id="Q9NQR9"/>
<dbReference type="PhosphoSitePlus" id="Q9NQR9"/>
<dbReference type="BioMuta" id="G6PC2"/>
<dbReference type="DMDM" id="74725272"/>
<dbReference type="PaxDb" id="9606-ENSP00000364512"/>
<dbReference type="Antibodypedia" id="53147">
    <property type="antibodies" value="82 antibodies from 13 providers"/>
</dbReference>
<dbReference type="DNASU" id="57818"/>
<dbReference type="Ensembl" id="ENST00000282075.5">
    <molecule id="Q9NQR9-2"/>
    <property type="protein sequence ID" value="ENSP00000282075.4"/>
    <property type="gene ID" value="ENSG00000152254.11"/>
</dbReference>
<dbReference type="Ensembl" id="ENST00000375363.8">
    <molecule id="Q9NQR9-1"/>
    <property type="protein sequence ID" value="ENSP00000364512.3"/>
    <property type="gene ID" value="ENSG00000152254.11"/>
</dbReference>
<dbReference type="Ensembl" id="ENST00000429379.2">
    <molecule id="Q9NQR9-3"/>
    <property type="protein sequence ID" value="ENSP00000396939.2"/>
    <property type="gene ID" value="ENSG00000152254.11"/>
</dbReference>
<dbReference type="Ensembl" id="ENST00000612807.1">
    <molecule id="Q9NQR9-3"/>
    <property type="protein sequence ID" value="ENSP00000481098.1"/>
    <property type="gene ID" value="ENSG00000278373.4"/>
</dbReference>
<dbReference type="Ensembl" id="ENST00000617403.1">
    <molecule id="Q9NQR9-2"/>
    <property type="protein sequence ID" value="ENSP00000483899.1"/>
    <property type="gene ID" value="ENSG00000278373.4"/>
</dbReference>
<dbReference type="Ensembl" id="ENST00000622133.4">
    <molecule id="Q9NQR9-1"/>
    <property type="protein sequence ID" value="ENSP00000482583.1"/>
    <property type="gene ID" value="ENSG00000278373.4"/>
</dbReference>
<dbReference type="GeneID" id="57818"/>
<dbReference type="KEGG" id="hsa:57818"/>
<dbReference type="MANE-Select" id="ENST00000375363.8">
    <property type="protein sequence ID" value="ENSP00000364512.3"/>
    <property type="RefSeq nucleotide sequence ID" value="NM_021176.3"/>
    <property type="RefSeq protein sequence ID" value="NP_066999.1"/>
</dbReference>
<dbReference type="UCSC" id="uc002uem.4">
    <molecule id="Q9NQR9-1"/>
    <property type="organism name" value="human"/>
</dbReference>
<dbReference type="AGR" id="HGNC:28906"/>
<dbReference type="CTD" id="57818"/>
<dbReference type="DisGeNET" id="57818"/>
<dbReference type="GeneCards" id="G6PC2"/>
<dbReference type="HGNC" id="HGNC:28906">
    <property type="gene designation" value="G6PC2"/>
</dbReference>
<dbReference type="HPA" id="ENSG00000152254">
    <property type="expression patterns" value="Group enriched (pancreas, retina)"/>
</dbReference>
<dbReference type="MIM" id="608058">
    <property type="type" value="gene"/>
</dbReference>
<dbReference type="MIM" id="612108">
    <property type="type" value="phenotype"/>
</dbReference>
<dbReference type="neXtProt" id="NX_Q9NQR9"/>
<dbReference type="OpenTargets" id="ENSG00000152254"/>
<dbReference type="PharmGKB" id="PA134944773"/>
<dbReference type="VEuPathDB" id="HostDB:ENSG00000152254"/>
<dbReference type="eggNOG" id="ENOG502QS9B">
    <property type="taxonomic scope" value="Eukaryota"/>
</dbReference>
<dbReference type="GeneTree" id="ENSGT00950000183150"/>
<dbReference type="HOGENOM" id="CLU_052517_0_0_1"/>
<dbReference type="InParanoid" id="Q9NQR9"/>
<dbReference type="OMA" id="EEHLFYV"/>
<dbReference type="OrthoDB" id="6416209at2759"/>
<dbReference type="PAN-GO" id="Q9NQR9">
    <property type="GO annotations" value="4 GO annotations based on evolutionary models"/>
</dbReference>
<dbReference type="PhylomeDB" id="Q9NQR9"/>
<dbReference type="TreeFam" id="TF324388"/>
<dbReference type="BioCyc" id="MetaCyc:HS14422-MONOMER"/>
<dbReference type="BRENDA" id="3.1.3.9">
    <property type="organism ID" value="2681"/>
</dbReference>
<dbReference type="PathwayCommons" id="Q9NQR9"/>
<dbReference type="Reactome" id="R-HSA-70263">
    <property type="pathway name" value="Gluconeogenesis"/>
</dbReference>
<dbReference type="SABIO-RK" id="Q9NQR9"/>
<dbReference type="SIGNOR" id="Q9NQR9"/>
<dbReference type="UniPathway" id="UPA00138"/>
<dbReference type="BioGRID-ORCS" id="57818">
    <property type="hits" value="13 hits in 1165 CRISPR screens"/>
</dbReference>
<dbReference type="GeneWiki" id="G6PC2"/>
<dbReference type="GenomeRNAi" id="57818"/>
<dbReference type="Pharos" id="Q9NQR9">
    <property type="development level" value="Tbio"/>
</dbReference>
<dbReference type="PRO" id="PR:Q9NQR9"/>
<dbReference type="Proteomes" id="UP000005640">
    <property type="component" value="Chromosome 2"/>
</dbReference>
<dbReference type="RNAct" id="Q9NQR9">
    <property type="molecule type" value="protein"/>
</dbReference>
<dbReference type="Bgee" id="ENSG00000152254">
    <property type="expression patterns" value="Expressed in islet of Langerhans and 47 other cell types or tissues"/>
</dbReference>
<dbReference type="ExpressionAtlas" id="Q9NQR9">
    <property type="expression patterns" value="baseline and differential"/>
</dbReference>
<dbReference type="GO" id="GO:0005789">
    <property type="term" value="C:endoplasmic reticulum membrane"/>
    <property type="evidence" value="ECO:0000304"/>
    <property type="project" value="Reactome"/>
</dbReference>
<dbReference type="GO" id="GO:0016020">
    <property type="term" value="C:membrane"/>
    <property type="evidence" value="ECO:0000318"/>
    <property type="project" value="GO_Central"/>
</dbReference>
<dbReference type="GO" id="GO:0004346">
    <property type="term" value="F:glucose-6-phosphatase activity"/>
    <property type="evidence" value="ECO:0000269"/>
    <property type="project" value="Reactome"/>
</dbReference>
<dbReference type="GO" id="GO:0006094">
    <property type="term" value="P:gluconeogenesis"/>
    <property type="evidence" value="ECO:0000318"/>
    <property type="project" value="GO_Central"/>
</dbReference>
<dbReference type="GO" id="GO:0051156">
    <property type="term" value="P:glucose 6-phosphate metabolic process"/>
    <property type="evidence" value="ECO:0000318"/>
    <property type="project" value="GO_Central"/>
</dbReference>
<dbReference type="GO" id="GO:0042593">
    <property type="term" value="P:glucose homeostasis"/>
    <property type="evidence" value="ECO:0000315"/>
    <property type="project" value="BHF-UCL"/>
</dbReference>
<dbReference type="GO" id="GO:0050796">
    <property type="term" value="P:regulation of insulin secretion"/>
    <property type="evidence" value="ECO:0000315"/>
    <property type="project" value="BHF-UCL"/>
</dbReference>
<dbReference type="CDD" id="cd03381">
    <property type="entry name" value="PAP2_glucose_6_phosphatase"/>
    <property type="match status" value="1"/>
</dbReference>
<dbReference type="FunFam" id="1.20.144.10:FF:000021">
    <property type="entry name" value="Glucose-6-phosphatase 2"/>
    <property type="match status" value="1"/>
</dbReference>
<dbReference type="Gene3D" id="1.20.144.10">
    <property type="entry name" value="Phosphatidic acid phosphatase type 2/haloperoxidase"/>
    <property type="match status" value="1"/>
</dbReference>
<dbReference type="InterPro" id="IPR016275">
    <property type="entry name" value="Glucose-6-phosphatase"/>
</dbReference>
<dbReference type="InterPro" id="IPR036938">
    <property type="entry name" value="P_Acid_Pase_2/haloperoxi_sf"/>
</dbReference>
<dbReference type="InterPro" id="IPR000326">
    <property type="entry name" value="P_Acid_Pase_2/haloperoxidase"/>
</dbReference>
<dbReference type="PANTHER" id="PTHR12591">
    <property type="entry name" value="GLUCOSE-6-PHOSPHATASE"/>
    <property type="match status" value="1"/>
</dbReference>
<dbReference type="PANTHER" id="PTHR12591:SF1">
    <property type="entry name" value="GLUCOSE-6-PHOSPHATASE 2"/>
    <property type="match status" value="1"/>
</dbReference>
<dbReference type="Pfam" id="PF01569">
    <property type="entry name" value="PAP2"/>
    <property type="match status" value="1"/>
</dbReference>
<dbReference type="PIRSF" id="PIRSF000905">
    <property type="entry name" value="Glucose-6-phosphatase"/>
    <property type="match status" value="1"/>
</dbReference>
<dbReference type="SMART" id="SM00014">
    <property type="entry name" value="acidPPc"/>
    <property type="match status" value="1"/>
</dbReference>
<dbReference type="SUPFAM" id="SSF48317">
    <property type="entry name" value="Acid phosphatase/Vanadium-dependent haloperoxidase"/>
    <property type="match status" value="1"/>
</dbReference>
<evidence type="ECO:0000250" key="1"/>
<evidence type="ECO:0000255" key="2"/>
<evidence type="ECO:0000269" key="3">
    <source>
    </source>
</evidence>
<evidence type="ECO:0000269" key="4">
    <source>
    </source>
</evidence>
<evidence type="ECO:0000269" key="5">
    <source>
    </source>
</evidence>
<evidence type="ECO:0000303" key="6">
    <source>
    </source>
</evidence>
<evidence type="ECO:0000303" key="7">
    <source ref="2"/>
</evidence>
<evidence type="ECO:0000305" key="8"/>
<keyword id="KW-0025">Alternative splicing</keyword>
<keyword id="KW-0256">Endoplasmic reticulum</keyword>
<keyword id="KW-0312">Gluconeogenesis</keyword>
<keyword id="KW-0325">Glycoprotein</keyword>
<keyword id="KW-0378">Hydrolase</keyword>
<keyword id="KW-0472">Membrane</keyword>
<keyword id="KW-1185">Reference proteome</keyword>
<keyword id="KW-0812">Transmembrane</keyword>
<keyword id="KW-1133">Transmembrane helix</keyword>
<accession>Q9NQR9</accession>
<accession>E9PAX2</accession>
<accession>Q6AHZ0</accession>
<feature type="chain" id="PRO_0000334509" description="Glucose-6-phosphatase 2">
    <location>
        <begin position="1"/>
        <end position="355"/>
    </location>
</feature>
<feature type="topological domain" description="Lumenal" evidence="2">
    <location>
        <begin position="1"/>
        <end position="24"/>
    </location>
</feature>
<feature type="transmembrane region" description="Helical" evidence="2">
    <location>
        <begin position="25"/>
        <end position="45"/>
    </location>
</feature>
<feature type="topological domain" description="Cytoplasmic" evidence="2">
    <location>
        <begin position="46"/>
        <end position="56"/>
    </location>
</feature>
<feature type="transmembrane region" description="Helical" evidence="2">
    <location>
        <begin position="57"/>
        <end position="77"/>
    </location>
</feature>
<feature type="topological domain" description="Lumenal" evidence="2">
    <location>
        <begin position="78"/>
        <end position="115"/>
    </location>
</feature>
<feature type="transmembrane region" description="Helical" evidence="2">
    <location>
        <begin position="116"/>
        <end position="136"/>
    </location>
</feature>
<feature type="topological domain" description="Cytoplasmic" evidence="2">
    <location>
        <begin position="137"/>
        <end position="146"/>
    </location>
</feature>
<feature type="transmembrane region" description="Helical" evidence="2">
    <location>
        <begin position="147"/>
        <end position="167"/>
    </location>
</feature>
<feature type="topological domain" description="Lumenal" evidence="2">
    <location>
        <position position="168"/>
    </location>
</feature>
<feature type="transmembrane region" description="Helical" evidence="2">
    <location>
        <begin position="169"/>
        <end position="189"/>
    </location>
</feature>
<feature type="topological domain" description="Cytoplasmic" evidence="2">
    <location>
        <begin position="190"/>
        <end position="211"/>
    </location>
</feature>
<feature type="transmembrane region" description="Helical" evidence="2">
    <location>
        <begin position="212"/>
        <end position="232"/>
    </location>
</feature>
<feature type="topological domain" description="Lumenal" evidence="2">
    <location>
        <begin position="233"/>
        <end position="261"/>
    </location>
</feature>
<feature type="transmembrane region" description="Helical" evidence="2">
    <location>
        <begin position="262"/>
        <end position="282"/>
    </location>
</feature>
<feature type="topological domain" description="Cytoplasmic" evidence="2">
    <location>
        <begin position="283"/>
        <end position="293"/>
    </location>
</feature>
<feature type="transmembrane region" description="Helical" evidence="2">
    <location>
        <begin position="294"/>
        <end position="314"/>
    </location>
</feature>
<feature type="topological domain" description="Lumenal" evidence="2">
    <location>
        <begin position="315"/>
        <end position="318"/>
    </location>
</feature>
<feature type="transmembrane region" description="Helical" evidence="2">
    <location>
        <begin position="319"/>
        <end position="339"/>
    </location>
</feature>
<feature type="topological domain" description="Cytoplasmic" evidence="2">
    <location>
        <begin position="340"/>
        <end position="355"/>
    </location>
</feature>
<feature type="short sequence motif" description="Prevents secretion from ER" evidence="2">
    <location>
        <begin position="352"/>
        <end position="355"/>
    </location>
</feature>
<feature type="active site" description="Proton donor" evidence="2">
    <location>
        <position position="115"/>
    </location>
</feature>
<feature type="active site" description="Nucleophile" evidence="1">
    <location>
        <position position="174"/>
    </location>
</feature>
<feature type="binding site" evidence="2">
    <location>
        <position position="79"/>
    </location>
    <ligand>
        <name>substrate</name>
    </ligand>
</feature>
<feature type="binding site" evidence="2">
    <location>
        <position position="168"/>
    </location>
    <ligand>
        <name>substrate</name>
    </ligand>
</feature>
<feature type="glycosylation site" description="N-linked (GlcNAc...) asparagine" evidence="5">
    <location>
        <position position="92"/>
    </location>
</feature>
<feature type="splice variant" id="VSP_033648" description="In isoform 2." evidence="6">
    <original>ILFGHRPYWWVQETQIYPNHSSPCLEQFP</original>
    <variation>KSIWPCNGRILCLVCHGNRCPEPHCLWDG</variation>
    <location>
        <begin position="74"/>
        <end position="102"/>
    </location>
</feature>
<feature type="splice variant" id="VSP_033649" description="In isoform 2." evidence="6">
    <location>
        <begin position="103"/>
        <end position="355"/>
    </location>
</feature>
<feature type="splice variant" id="VSP_046180" description="In isoform 3." evidence="7">
    <original>LTWSFLW</original>
    <variation>HAGGRGL</variation>
    <location>
        <begin position="148"/>
        <end position="154"/>
    </location>
</feature>
<feature type="splice variant" id="VSP_046181" description="In isoform 3." evidence="7">
    <location>
        <begin position="155"/>
        <end position="355"/>
    </location>
</feature>
<feature type="sequence variant" id="VAR_043372" description="In dbSNP:rs2232322.">
    <original>I</original>
    <variation>V</variation>
    <location>
        <position position="171"/>
    </location>
</feature>
<feature type="sequence variant" id="VAR_043373" description="In dbSNP:rs2232323.">
    <original>Y</original>
    <variation>S</variation>
    <location>
        <position position="207"/>
    </location>
</feature>
<feature type="sequence variant" id="VAR_043374" description="In dbSNP:rs492594.">
    <original>V</original>
    <variation>L</variation>
    <location>
        <position position="219"/>
    </location>
</feature>
<feature type="sequence variant" id="VAR_043375" description="In dbSNP:rs2232326.">
    <original>S</original>
    <variation>P</variation>
    <location>
        <position position="324"/>
    </location>
</feature>
<feature type="sequence variant" id="VAR_043376" description="In dbSNP:rs2232327.">
    <original>P</original>
    <variation>L</variation>
    <location>
        <position position="340"/>
    </location>
</feature>
<feature type="sequence variant" id="VAR_043377" description="In dbSNP:rs2232328.">
    <original>S</original>
    <variation>C</variation>
    <location>
        <position position="342"/>
    </location>
</feature>
<feature type="mutagenesis site" description="No effect on N-glycosylation." evidence="5">
    <original>N</original>
    <variation>A</variation>
    <location>
        <position position="50"/>
    </location>
</feature>
<feature type="mutagenesis site" description="Loss of N-glycosylation." evidence="5">
    <original>N</original>
    <variation>A</variation>
    <location>
        <position position="92"/>
    </location>
</feature>
<feature type="mutagenesis site" description="No effect on N-glycosylation." evidence="5">
    <original>N</original>
    <variation>A</variation>
    <location>
        <position position="287"/>
    </location>
</feature>
<reference key="1">
    <citation type="journal article" date="2001" name="J. Biol. Chem.">
        <title>Cloning and characterization of the human and rat islet-specific glucose-6-phosphatase catalytic subunit-related protein (IGRP) genes.</title>
        <authorList>
            <person name="Martin C.C."/>
            <person name="Bischof L.J."/>
            <person name="Bergman B."/>
            <person name="Hornbuckle L.A."/>
            <person name="Hilliker C."/>
            <person name="Frigeri C."/>
            <person name="Wahl D."/>
            <person name="Svitek C.A."/>
            <person name="Wong R."/>
            <person name="Goldman J.K."/>
            <person name="Oeser J.K."/>
            <person name="Lepretre F."/>
            <person name="Froguel P."/>
            <person name="O'Brien R.M."/>
            <person name="Hutton J.C."/>
        </authorList>
    </citation>
    <scope>NUCLEOTIDE SEQUENCE [GENOMIC DNA]</scope>
    <scope>CHARACTERIZATION</scope>
    <scope>TISSUE SPECIFICITY</scope>
</reference>
<reference key="2">
    <citation type="submission" date="2002-07" db="EMBL/GenBank/DDBJ databases">
        <title>Endocrine pancreas consortium.</title>
        <authorList>
            <person name="Melton D."/>
            <person name="Brown J."/>
            <person name="Kenty G."/>
            <person name="Permutt A."/>
            <person name="Lee C."/>
            <person name="Kaestner K."/>
            <person name="Lemishka I."/>
            <person name="Scearce M."/>
            <person name="Brestelli J."/>
            <person name="Gradwohl G."/>
            <person name="Clifton S."/>
            <person name="Hillier L."/>
            <person name="Marra M."/>
            <person name="Pape D."/>
            <person name="Wylie T."/>
            <person name="Martin J."/>
            <person name="Blistain A."/>
            <person name="Schmitt A."/>
            <person name="Theising B."/>
            <person name="Ritter E."/>
            <person name="Ronko I."/>
            <person name="Bennett J."/>
            <person name="Cardenas M."/>
            <person name="Gibbons M."/>
            <person name="McCann R."/>
            <person name="Cole R."/>
            <person name="Tsagareishvili R."/>
            <person name="Williams T."/>
            <person name="Jackson Y."/>
            <person name="Bowers Y."/>
        </authorList>
    </citation>
    <scope>NUCLEOTIDE SEQUENCE [LARGE SCALE MRNA] (ISOFORM 3)</scope>
    <source>
        <tissue>Pancreas</tissue>
    </source>
</reference>
<reference key="3">
    <citation type="journal article" date="2007" name="BMC Genomics">
        <title>The full-ORF clone resource of the German cDNA consortium.</title>
        <authorList>
            <person name="Bechtel S."/>
            <person name="Rosenfelder H."/>
            <person name="Duda A."/>
            <person name="Schmidt C.P."/>
            <person name="Ernst U."/>
            <person name="Wellenreuther R."/>
            <person name="Mehrle A."/>
            <person name="Schuster C."/>
            <person name="Bahr A."/>
            <person name="Bloecker H."/>
            <person name="Heubner D."/>
            <person name="Hoerlein A."/>
            <person name="Michel G."/>
            <person name="Wedler H."/>
            <person name="Koehrer K."/>
            <person name="Ottenwaelder B."/>
            <person name="Poustka A."/>
            <person name="Wiemann S."/>
            <person name="Schupp I."/>
        </authorList>
    </citation>
    <scope>NUCLEOTIDE SEQUENCE [LARGE SCALE MRNA] (ISOFORM 2)</scope>
    <source>
        <tissue>Retina</tissue>
    </source>
</reference>
<reference key="4">
    <citation type="journal article" date="2005" name="Nature">
        <title>Generation and annotation of the DNA sequences of human chromosomes 2 and 4.</title>
        <authorList>
            <person name="Hillier L.W."/>
            <person name="Graves T.A."/>
            <person name="Fulton R.S."/>
            <person name="Fulton L.A."/>
            <person name="Pepin K.H."/>
            <person name="Minx P."/>
            <person name="Wagner-McPherson C."/>
            <person name="Layman D."/>
            <person name="Wylie K."/>
            <person name="Sekhon M."/>
            <person name="Becker M.C."/>
            <person name="Fewell G.A."/>
            <person name="Delehaunty K.D."/>
            <person name="Miner T.L."/>
            <person name="Nash W.E."/>
            <person name="Kremitzki C."/>
            <person name="Oddy L."/>
            <person name="Du H."/>
            <person name="Sun H."/>
            <person name="Bradshaw-Cordum H."/>
            <person name="Ali J."/>
            <person name="Carter J."/>
            <person name="Cordes M."/>
            <person name="Harris A."/>
            <person name="Isak A."/>
            <person name="van Brunt A."/>
            <person name="Nguyen C."/>
            <person name="Du F."/>
            <person name="Courtney L."/>
            <person name="Kalicki J."/>
            <person name="Ozersky P."/>
            <person name="Abbott S."/>
            <person name="Armstrong J."/>
            <person name="Belter E.A."/>
            <person name="Caruso L."/>
            <person name="Cedroni M."/>
            <person name="Cotton M."/>
            <person name="Davidson T."/>
            <person name="Desai A."/>
            <person name="Elliott G."/>
            <person name="Erb T."/>
            <person name="Fronick C."/>
            <person name="Gaige T."/>
            <person name="Haakenson W."/>
            <person name="Haglund K."/>
            <person name="Holmes A."/>
            <person name="Harkins R."/>
            <person name="Kim K."/>
            <person name="Kruchowski S.S."/>
            <person name="Strong C.M."/>
            <person name="Grewal N."/>
            <person name="Goyea E."/>
            <person name="Hou S."/>
            <person name="Levy A."/>
            <person name="Martinka S."/>
            <person name="Mead K."/>
            <person name="McLellan M.D."/>
            <person name="Meyer R."/>
            <person name="Randall-Maher J."/>
            <person name="Tomlinson C."/>
            <person name="Dauphin-Kohlberg S."/>
            <person name="Kozlowicz-Reilly A."/>
            <person name="Shah N."/>
            <person name="Swearengen-Shahid S."/>
            <person name="Snider J."/>
            <person name="Strong J.T."/>
            <person name="Thompson J."/>
            <person name="Yoakum M."/>
            <person name="Leonard S."/>
            <person name="Pearman C."/>
            <person name="Trani L."/>
            <person name="Radionenko M."/>
            <person name="Waligorski J.E."/>
            <person name="Wang C."/>
            <person name="Rock S.M."/>
            <person name="Tin-Wollam A.-M."/>
            <person name="Maupin R."/>
            <person name="Latreille P."/>
            <person name="Wendl M.C."/>
            <person name="Yang S.-P."/>
            <person name="Pohl C."/>
            <person name="Wallis J.W."/>
            <person name="Spieth J."/>
            <person name="Bieri T.A."/>
            <person name="Berkowicz N."/>
            <person name="Nelson J.O."/>
            <person name="Osborne J."/>
            <person name="Ding L."/>
            <person name="Meyer R."/>
            <person name="Sabo A."/>
            <person name="Shotland Y."/>
            <person name="Sinha P."/>
            <person name="Wohldmann P.E."/>
            <person name="Cook L.L."/>
            <person name="Hickenbotham M.T."/>
            <person name="Eldred J."/>
            <person name="Williams D."/>
            <person name="Jones T.A."/>
            <person name="She X."/>
            <person name="Ciccarelli F.D."/>
            <person name="Izaurralde E."/>
            <person name="Taylor J."/>
            <person name="Schmutz J."/>
            <person name="Myers R.M."/>
            <person name="Cox D.R."/>
            <person name="Huang X."/>
            <person name="McPherson J.D."/>
            <person name="Mardis E.R."/>
            <person name="Clifton S.W."/>
            <person name="Warren W.C."/>
            <person name="Chinwalla A.T."/>
            <person name="Eddy S.R."/>
            <person name="Marra M.A."/>
            <person name="Ovcharenko I."/>
            <person name="Furey T.S."/>
            <person name="Miller W."/>
            <person name="Eichler E.E."/>
            <person name="Bork P."/>
            <person name="Suyama M."/>
            <person name="Torrents D."/>
            <person name="Waterston R.H."/>
            <person name="Wilson R.K."/>
        </authorList>
    </citation>
    <scope>NUCLEOTIDE SEQUENCE [LARGE SCALE GENOMIC DNA]</scope>
</reference>
<reference key="5">
    <citation type="submission" date="2005-09" db="EMBL/GenBank/DDBJ databases">
        <authorList>
            <person name="Mural R.J."/>
            <person name="Istrail S."/>
            <person name="Sutton G.G."/>
            <person name="Florea L."/>
            <person name="Halpern A.L."/>
            <person name="Mobarry C.M."/>
            <person name="Lippert R."/>
            <person name="Walenz B."/>
            <person name="Shatkay H."/>
            <person name="Dew I."/>
            <person name="Miller J.R."/>
            <person name="Flanigan M.J."/>
            <person name="Edwards N.J."/>
            <person name="Bolanos R."/>
            <person name="Fasulo D."/>
            <person name="Halldorsson B.V."/>
            <person name="Hannenhalli S."/>
            <person name="Turner R."/>
            <person name="Yooseph S."/>
            <person name="Lu F."/>
            <person name="Nusskern D.R."/>
            <person name="Shue B.C."/>
            <person name="Zheng X.H."/>
            <person name="Zhong F."/>
            <person name="Delcher A.L."/>
            <person name="Huson D.H."/>
            <person name="Kravitz S.A."/>
            <person name="Mouchard L."/>
            <person name="Reinert K."/>
            <person name="Remington K.A."/>
            <person name="Clark A.G."/>
            <person name="Waterman M.S."/>
            <person name="Eichler E.E."/>
            <person name="Adams M.D."/>
            <person name="Hunkapiller M.W."/>
            <person name="Myers E.W."/>
            <person name="Venter J.C."/>
        </authorList>
    </citation>
    <scope>NUCLEOTIDE SEQUENCE [LARGE SCALE GENOMIC DNA]</scope>
</reference>
<reference key="6">
    <citation type="journal article" date="2004" name="Genome Res.">
        <title>The status, quality, and expansion of the NIH full-length cDNA project: the Mammalian Gene Collection (MGC).</title>
        <authorList>
            <consortium name="The MGC Project Team"/>
        </authorList>
    </citation>
    <scope>NUCLEOTIDE SEQUENCE [LARGE SCALE MRNA] (ISOFORM 1)</scope>
    <source>
        <tissue>Cerebellum</tissue>
    </source>
</reference>
<reference key="7">
    <citation type="journal article" date="2004" name="FEBS Lett.">
        <title>The islet-specific glucose-6-phosphatase-related protein, implicated in diabetes, is a glycoprotein embedded in the endoplasmic reticulum membrane.</title>
        <authorList>
            <person name="Shieh J.-J."/>
            <person name="Pan C.-J."/>
            <person name="Mansfield B.C."/>
            <person name="Chou J.Y."/>
        </authorList>
    </citation>
    <scope>SUBCELLULAR LOCATION</scope>
    <scope>TOPOLOGY</scope>
    <scope>MUTAGENESIS OF ASN-50; ASN-92 AND ASN-287</scope>
    <scope>GLYCOSYLATION AT ASN-92</scope>
</reference>
<reference key="8">
    <citation type="journal article" date="2004" name="J. Biol. Chem.">
        <title>Enzymatic characterization of the pancreatic islet-specific glucose-6-phosphatase-related protein (IGRP).</title>
        <authorList>
            <person name="Petrolonis A.J."/>
            <person name="Yang Q."/>
            <person name="Tummino P.J."/>
            <person name="Fish S.M."/>
            <person name="Prack A.E."/>
            <person name="Jain S."/>
            <person name="Parsons T.F."/>
            <person name="Li P."/>
            <person name="Dales N.A."/>
            <person name="Ge L."/>
            <person name="Langston S.P."/>
            <person name="Schuller A.G.P."/>
            <person name="An W.F."/>
            <person name="Tartaglia L.A."/>
            <person name="Chen H."/>
            <person name="Hong S.-B."/>
        </authorList>
    </citation>
    <scope>CATALYTIC ACTIVITY</scope>
</reference>
<reference key="9">
    <citation type="journal article" date="2006" name="Diabetologia">
        <title>Alternative splicing of G6PC2, the gene coding for the islet-specific glucose-6-phosphatase catalytic subunit-related protein (IGRP), results in differential expression in human thymus and spleen compared with pancreas.</title>
        <authorList>
            <person name="Dogra R.S."/>
            <person name="Vaidyanathan P."/>
            <person name="Prabakar K.R."/>
            <person name="Marshall K.E."/>
            <person name="Hutton J.C."/>
            <person name="Pugliese A."/>
        </authorList>
    </citation>
    <scope>ALTERNATIVE SPLICING</scope>
</reference>
<reference key="10">
    <citation type="journal article" date="2008" name="Science">
        <title>A polymorphism within the G6PC2 gene is associated with fasting plasma glucose levels.</title>
        <authorList>
            <person name="Bouatia-Naji N."/>
            <person name="Rocheleau G."/>
            <person name="Van Lommel L."/>
            <person name="Lemaire K."/>
            <person name="Schuit F."/>
            <person name="Cavalcanti-Proenca C."/>
            <person name="Marchand M."/>
            <person name="Hartikainen A.-L."/>
            <person name="Sovio U."/>
            <person name="De Graeve F."/>
            <person name="Rung J."/>
            <person name="Vaxillaire M."/>
            <person name="Tichet J."/>
            <person name="Marre M."/>
            <person name="Balkau B."/>
            <person name="Weill J."/>
            <person name="Elliott P."/>
            <person name="Jarvelin M.-R."/>
            <person name="Meyre D."/>
            <person name="Polychronakos C."/>
            <person name="Dina C."/>
            <person name="Sladek R."/>
            <person name="Froguel P."/>
        </authorList>
    </citation>
    <scope>INVOLVEMENT IN FGQTL1</scope>
</reference>